<organism>
    <name type="scientific">Halobacterium salinarum (strain ATCC 700922 / JCM 11081 / NRC-1)</name>
    <name type="common">Halobacterium halobium</name>
    <dbReference type="NCBI Taxonomy" id="64091"/>
    <lineage>
        <taxon>Archaea</taxon>
        <taxon>Methanobacteriati</taxon>
        <taxon>Methanobacteriota</taxon>
        <taxon>Stenosarchaea group</taxon>
        <taxon>Halobacteria</taxon>
        <taxon>Halobacteriales</taxon>
        <taxon>Halobacteriaceae</taxon>
        <taxon>Halobacterium</taxon>
        <taxon>Halobacterium salinarum NRC-34001</taxon>
    </lineage>
</organism>
<feature type="chain" id="PRO_0000149495" description="HGPRTase-like protein">
    <location>
        <begin position="1"/>
        <end position="188"/>
    </location>
</feature>
<comment type="function">
    <text evidence="1">May catalyze a purine salvage reaction, the substrate is unknown.</text>
</comment>
<comment type="similarity">
    <text evidence="1">Belongs to the purine/pyrimidine phosphoribosyltransferase family. Archaeal HPRT subfamily.</text>
</comment>
<keyword id="KW-0660">Purine salvage</keyword>
<keyword id="KW-1185">Reference proteome</keyword>
<keyword id="KW-0808">Transferase</keyword>
<proteinExistence type="inferred from homology"/>
<sequence length="188" mass="20613">MDRLKQSLLDAPIIEKDGYHYFVHPISDGVPMLEPELLREIVIRIIRKAELDEVDKIVTPAAMGIHISTAVSLMTDIPIVVIRKREYGLPGEVALSQETGYSENEMYINDVHEGDRVLVLDDVLSTGGTLRAITDALEQTGADVADVLAVIKKAGPNELDDTDMDVRTLINVDVADGEVVVVDDQGDH</sequence>
<protein>
    <recommendedName>
        <fullName evidence="1">HGPRTase-like protein</fullName>
        <ecNumber evidence="1">2.4.2.-</ecNumber>
    </recommendedName>
</protein>
<gene>
    <name type="ordered locus">VNG_0559G</name>
</gene>
<dbReference type="EC" id="2.4.2.-" evidence="1"/>
<dbReference type="EMBL" id="AE004437">
    <property type="protein sequence ID" value="AAG19077.1"/>
    <property type="molecule type" value="Genomic_DNA"/>
</dbReference>
<dbReference type="PIR" id="A84214">
    <property type="entry name" value="A84214"/>
</dbReference>
<dbReference type="SMR" id="Q9HRT1"/>
<dbReference type="FunCoup" id="Q9HRT1">
    <property type="interactions" value="42"/>
</dbReference>
<dbReference type="STRING" id="64091.VNG_0559G"/>
<dbReference type="PaxDb" id="64091-VNG_0559G"/>
<dbReference type="DNASU" id="1447382"/>
<dbReference type="KEGG" id="hal:VNG_0559G"/>
<dbReference type="PATRIC" id="fig|64091.14.peg.425"/>
<dbReference type="HOGENOM" id="CLU_126376_0_0_2"/>
<dbReference type="InParanoid" id="Q9HRT1"/>
<dbReference type="OrthoDB" id="8323at2157"/>
<dbReference type="PhylomeDB" id="Q9HRT1"/>
<dbReference type="Proteomes" id="UP000000554">
    <property type="component" value="Chromosome"/>
</dbReference>
<dbReference type="GO" id="GO:0016740">
    <property type="term" value="F:transferase activity"/>
    <property type="evidence" value="ECO:0007669"/>
    <property type="project" value="UniProtKB-KW"/>
</dbReference>
<dbReference type="GO" id="GO:0006166">
    <property type="term" value="P:purine ribonucleoside salvage"/>
    <property type="evidence" value="ECO:0007669"/>
    <property type="project" value="UniProtKB-KW"/>
</dbReference>
<dbReference type="CDD" id="cd06223">
    <property type="entry name" value="PRTases_typeI"/>
    <property type="match status" value="1"/>
</dbReference>
<dbReference type="Gene3D" id="3.40.50.2020">
    <property type="match status" value="1"/>
</dbReference>
<dbReference type="HAMAP" id="MF_01467">
    <property type="entry name" value="Hypx_phosphoribosyltr"/>
    <property type="match status" value="1"/>
</dbReference>
<dbReference type="InterPro" id="IPR026597">
    <property type="entry name" value="HGPRTase-like"/>
</dbReference>
<dbReference type="InterPro" id="IPR000836">
    <property type="entry name" value="PRibTrfase_dom"/>
</dbReference>
<dbReference type="InterPro" id="IPR029057">
    <property type="entry name" value="PRTase-like"/>
</dbReference>
<dbReference type="InterPro" id="IPR050118">
    <property type="entry name" value="Pur/Pyrimidine_PRTase"/>
</dbReference>
<dbReference type="NCBIfam" id="NF040646">
    <property type="entry name" value="HPT_Archaea"/>
    <property type="match status" value="1"/>
</dbReference>
<dbReference type="NCBIfam" id="NF002635">
    <property type="entry name" value="PRK02304.1-4"/>
    <property type="match status" value="1"/>
</dbReference>
<dbReference type="PANTHER" id="PTHR43864">
    <property type="entry name" value="HYPOXANTHINE/GUANINE PHOSPHORIBOSYLTRANSFERASE"/>
    <property type="match status" value="1"/>
</dbReference>
<dbReference type="PANTHER" id="PTHR43864:SF1">
    <property type="entry name" value="XANTHINE PHOSPHORIBOSYLTRANSFERASE"/>
    <property type="match status" value="1"/>
</dbReference>
<dbReference type="Pfam" id="PF00156">
    <property type="entry name" value="Pribosyltran"/>
    <property type="match status" value="1"/>
</dbReference>
<dbReference type="SUPFAM" id="SSF53271">
    <property type="entry name" value="PRTase-like"/>
    <property type="match status" value="1"/>
</dbReference>
<dbReference type="PROSITE" id="PS00103">
    <property type="entry name" value="PUR_PYR_PR_TRANSFER"/>
    <property type="match status" value="1"/>
</dbReference>
<reference key="1">
    <citation type="journal article" date="2000" name="Proc. Natl. Acad. Sci. U.S.A.">
        <title>Genome sequence of Halobacterium species NRC-1.</title>
        <authorList>
            <person name="Ng W.V."/>
            <person name="Kennedy S.P."/>
            <person name="Mahairas G.G."/>
            <person name="Berquist B."/>
            <person name="Pan M."/>
            <person name="Shukla H.D."/>
            <person name="Lasky S.R."/>
            <person name="Baliga N.S."/>
            <person name="Thorsson V."/>
            <person name="Sbrogna J."/>
            <person name="Swartzell S."/>
            <person name="Weir D."/>
            <person name="Hall J."/>
            <person name="Dahl T.A."/>
            <person name="Welti R."/>
            <person name="Goo Y.A."/>
            <person name="Leithauser B."/>
            <person name="Keller K."/>
            <person name="Cruz R."/>
            <person name="Danson M.J."/>
            <person name="Hough D.W."/>
            <person name="Maddocks D.G."/>
            <person name="Jablonski P.E."/>
            <person name="Krebs M.P."/>
            <person name="Angevine C.M."/>
            <person name="Dale H."/>
            <person name="Isenbarger T.A."/>
            <person name="Peck R.F."/>
            <person name="Pohlschroder M."/>
            <person name="Spudich J.L."/>
            <person name="Jung K.-H."/>
            <person name="Alam M."/>
            <person name="Freitas T."/>
            <person name="Hou S."/>
            <person name="Daniels C.J."/>
            <person name="Dennis P.P."/>
            <person name="Omer A.D."/>
            <person name="Ebhardt H."/>
            <person name="Lowe T.M."/>
            <person name="Liang P."/>
            <person name="Riley M."/>
            <person name="Hood L."/>
            <person name="DasSarma S."/>
        </authorList>
    </citation>
    <scope>NUCLEOTIDE SEQUENCE [LARGE SCALE GENOMIC DNA]</scope>
    <source>
        <strain>ATCC 700922 / JCM 11081 / NRC-1</strain>
    </source>
</reference>
<evidence type="ECO:0000255" key="1">
    <source>
        <dbReference type="HAMAP-Rule" id="MF_01467"/>
    </source>
</evidence>
<name>HPRL_HALSA</name>
<accession>Q9HRT1</accession>